<comment type="function">
    <text evidence="5">Cleaves the beta-1,4-linkages between beta-D-galactose and alpha-L-3,6-anhydro-galactose residues in agarose. Cleaves agarose in a random manner with retention of the anomeric-bond configuration, producing beta-anomers that give rise progressively to alpha-anomers when mutarotation takes place.</text>
</comment>
<comment type="catalytic activity">
    <reaction evidence="5">
        <text>Hydrolysis of (1-&gt;4)-beta-D-galactosidic linkages in agarose, giving the tetramer as the predominant product.</text>
        <dbReference type="EC" id="3.2.1.81"/>
    </reaction>
</comment>
<comment type="biophysicochemical properties">
    <kinetics>
        <KM evidence="5">2 mM for agarose</KM>
        <text>kcat is 150 sec(-1).</text>
    </kinetics>
</comment>
<comment type="subunit">
    <text evidence="4 5">Monomer.</text>
</comment>
<comment type="subcellular location">
    <subcellularLocation>
        <location evidence="5">Secreted</location>
    </subcellularLocation>
</comment>
<comment type="induction">
    <text evidence="6">When cells are grown with the low sulfated agar.</text>
</comment>
<comment type="PTM">
    <text evidence="5">Proteolytically cleaved into mature beta-agarase A catalytic chain (AgaAc).</text>
</comment>
<comment type="similarity">
    <text evidence="7">Belongs to the glycosyl hydrolase 16 family.</text>
</comment>
<gene>
    <name type="primary">agaA</name>
    <name type="ordered locus">zobellia_4203</name>
</gene>
<organism>
    <name type="scientific">Zobellia galactanivorans (strain DSM 12802 / CCUG 47099 / CIP 106680 / NCIMB 13871 / Dsij)</name>
    <dbReference type="NCBI Taxonomy" id="63186"/>
    <lineage>
        <taxon>Bacteria</taxon>
        <taxon>Pseudomonadati</taxon>
        <taxon>Bacteroidota</taxon>
        <taxon>Flavobacteriia</taxon>
        <taxon>Flavobacteriales</taxon>
        <taxon>Flavobacteriaceae</taxon>
        <taxon>Zobellia</taxon>
    </lineage>
</organism>
<name>AGAA_ZOBGA</name>
<keyword id="KW-0002">3D-structure</keyword>
<keyword id="KW-0903">Direct protein sequencing</keyword>
<keyword id="KW-0326">Glycosidase</keyword>
<keyword id="KW-0378">Hydrolase</keyword>
<keyword id="KW-1185">Reference proteome</keyword>
<keyword id="KW-0964">Secreted</keyword>
<keyword id="KW-0732">Signal</keyword>
<feature type="signal peptide" evidence="1">
    <location>
        <begin position="1"/>
        <end position="19"/>
    </location>
</feature>
<feature type="chain" id="PRO_5000055268" description="Beta-agarase A">
    <location>
        <begin position="20"/>
        <end position="539"/>
    </location>
</feature>
<feature type="chain" id="PRO_5000055269" description="Beta-agarase A catalytic chain">
    <location>
        <begin position="20"/>
        <end position="295"/>
    </location>
</feature>
<feature type="domain" description="GH16" evidence="2">
    <location>
        <begin position="21"/>
        <end position="289"/>
    </location>
</feature>
<feature type="region of interest" description="Disordered" evidence="3">
    <location>
        <begin position="332"/>
        <end position="353"/>
    </location>
</feature>
<feature type="active site" description="Nucleophile" evidence="8">
    <location>
        <position position="147"/>
    </location>
</feature>
<feature type="active site" description="Proton donor" evidence="8">
    <location>
        <position position="152"/>
    </location>
</feature>
<feature type="binding site" evidence="4">
    <location>
        <position position="73"/>
    </location>
    <ligand>
        <name>substrate</name>
    </ligand>
</feature>
<feature type="binding site" evidence="4">
    <location>
        <begin position="82"/>
        <end position="92"/>
    </location>
    <ligand>
        <name>substrate</name>
    </ligand>
</feature>
<feature type="binding site" evidence="4">
    <location>
        <begin position="96"/>
        <end position="98"/>
    </location>
    <ligand>
        <name>substrate</name>
    </ligand>
</feature>
<feature type="binding site" evidence="4">
    <location>
        <position position="144"/>
    </location>
    <ligand>
        <name>substrate</name>
    </ligand>
</feature>
<feature type="binding site" evidence="4">
    <location>
        <position position="176"/>
    </location>
    <ligand>
        <name>substrate</name>
    </ligand>
</feature>
<feature type="binding site" evidence="4">
    <location>
        <position position="271"/>
    </location>
    <ligand>
        <name>substrate</name>
    </ligand>
</feature>
<feature type="mutagenesis site" description="Abolishes beta-agarase activity." evidence="4">
    <original>E</original>
    <variation>S</variation>
    <location>
        <position position="147"/>
    </location>
</feature>
<feature type="sequence conflict" description="In Ref. 1; AAF21820." evidence="7" ref="1">
    <original>P</original>
    <variation>A</variation>
    <location>
        <position position="84"/>
    </location>
</feature>
<feature type="turn" evidence="9">
    <location>
        <begin position="22"/>
        <end position="25"/>
    </location>
</feature>
<feature type="strand" evidence="9">
    <location>
        <begin position="36"/>
        <end position="40"/>
    </location>
</feature>
<feature type="helix" evidence="9">
    <location>
        <begin position="42"/>
        <end position="44"/>
    </location>
</feature>
<feature type="strand" evidence="9">
    <location>
        <begin position="50"/>
        <end position="53"/>
    </location>
</feature>
<feature type="helix" evidence="9">
    <location>
        <begin position="59"/>
        <end position="62"/>
    </location>
</feature>
<feature type="strand" evidence="9">
    <location>
        <begin position="65"/>
        <end position="68"/>
    </location>
</feature>
<feature type="strand" evidence="9">
    <location>
        <begin position="70"/>
        <end position="72"/>
    </location>
</feature>
<feature type="strand" evidence="9">
    <location>
        <begin position="79"/>
        <end position="81"/>
    </location>
</feature>
<feature type="helix" evidence="9">
    <location>
        <begin position="83"/>
        <end position="85"/>
    </location>
</feature>
<feature type="strand" evidence="9">
    <location>
        <begin position="86"/>
        <end position="91"/>
    </location>
</feature>
<feature type="strand" evidence="9">
    <location>
        <begin position="93"/>
        <end position="101"/>
    </location>
</feature>
<feature type="strand" evidence="9">
    <location>
        <begin position="104"/>
        <end position="107"/>
    </location>
</feature>
<feature type="strand" evidence="9">
    <location>
        <begin position="109"/>
        <end position="114"/>
    </location>
</feature>
<feature type="strand" evidence="9">
    <location>
        <begin position="118"/>
        <end position="127"/>
    </location>
</feature>
<feature type="strand" evidence="9">
    <location>
        <begin position="130"/>
        <end position="140"/>
    </location>
</feature>
<feature type="strand" evidence="9">
    <location>
        <begin position="146"/>
        <end position="154"/>
    </location>
</feature>
<feature type="helix" evidence="9">
    <location>
        <begin position="157"/>
        <end position="159"/>
    </location>
</feature>
<feature type="helix" evidence="9">
    <location>
        <begin position="161"/>
        <end position="164"/>
    </location>
</feature>
<feature type="strand" evidence="9">
    <location>
        <begin position="166"/>
        <end position="175"/>
    </location>
</feature>
<feature type="turn" evidence="9">
    <location>
        <begin position="176"/>
        <end position="179"/>
    </location>
</feature>
<feature type="strand" evidence="9">
    <location>
        <begin position="180"/>
        <end position="182"/>
    </location>
</feature>
<feature type="helix" evidence="9">
    <location>
        <begin position="187"/>
        <end position="189"/>
    </location>
</feature>
<feature type="strand" evidence="9">
    <location>
        <begin position="190"/>
        <end position="192"/>
    </location>
</feature>
<feature type="helix" evidence="9">
    <location>
        <begin position="198"/>
        <end position="200"/>
    </location>
</feature>
<feature type="strand" evidence="9">
    <location>
        <begin position="203"/>
        <end position="211"/>
    </location>
</feature>
<feature type="strand" evidence="9">
    <location>
        <begin position="214"/>
        <end position="219"/>
    </location>
</feature>
<feature type="strand" evidence="9">
    <location>
        <begin position="222"/>
        <end position="227"/>
    </location>
</feature>
<feature type="helix" evidence="9">
    <location>
        <begin position="229"/>
        <end position="232"/>
    </location>
</feature>
<feature type="turn" evidence="9">
    <location>
        <begin position="237"/>
        <end position="240"/>
    </location>
</feature>
<feature type="strand" evidence="9">
    <location>
        <begin position="247"/>
        <end position="254"/>
    </location>
</feature>
<feature type="turn" evidence="9">
    <location>
        <begin position="257"/>
        <end position="259"/>
    </location>
</feature>
<feature type="helix" evidence="9">
    <location>
        <begin position="265"/>
        <end position="269"/>
    </location>
</feature>
<feature type="turn" evidence="9">
    <location>
        <begin position="271"/>
        <end position="273"/>
    </location>
</feature>
<feature type="strand" evidence="9">
    <location>
        <begin position="274"/>
        <end position="288"/>
    </location>
</feature>
<evidence type="ECO:0000255" key="1"/>
<evidence type="ECO:0000255" key="2">
    <source>
        <dbReference type="PROSITE-ProRule" id="PRU01098"/>
    </source>
</evidence>
<evidence type="ECO:0000256" key="3">
    <source>
        <dbReference type="SAM" id="MobiDB-lite"/>
    </source>
</evidence>
<evidence type="ECO:0000269" key="4">
    <source>
    </source>
</evidence>
<evidence type="ECO:0000269" key="5">
    <source>
    </source>
</evidence>
<evidence type="ECO:0000269" key="6">
    <source>
    </source>
</evidence>
<evidence type="ECO:0000305" key="7"/>
<evidence type="ECO:0000305" key="8">
    <source>
    </source>
</evidence>
<evidence type="ECO:0007829" key="9">
    <source>
        <dbReference type="PDB" id="1O4Y"/>
    </source>
</evidence>
<proteinExistence type="evidence at protein level"/>
<sequence length="539" mass="60020">MKKNYLLLYFIFLLCGSIAAQDWNGIPVPANPGNGMTWQLQDNVSDSFNYTSSEGNRPTAFTSKWKPSYINGWTGPGSTIFNAPQAWTNGSQLAIQAQPAGNGKSYNGIITSKNKIQYPVYMEIKAKIMDQVLANAFWTLTDDETQEIDIMEGYGSDRGGTWFAQRMHLSHHTFIRNPFTDYQPMGDATWYYNGGTPWRSAYHRYGCYWKDPFTLEYYIDGVKVRTVTRAEIDPNNHLGGTGLNQATNIIIDCENQTDWRPAATQEELADDSKNIFWVDWIRVYKPVAVSGGGNNGNDGATEFQYDLGTDTSAVWPGYTRVSNTTRAGNFGWANTNDIGSRDRGASNGRNNINRDINFSSQTRFFTQDLSNGTYNVLITFGDTYARKNMNVAAEGQNKLTNINTNAGQYVSRSFDVNVNDGKLDLRFSVGNGGDVWSITRIWIRKVTSNSANLLAAKGLTLEDPVETTEFLYPNPAKTDDFVTVPNSEIGSSIIIYNSAGQVVKKVSVVSENQKISLEGFAKGMYFINLNGQSTKLIVQ</sequence>
<protein>
    <recommendedName>
        <fullName>Beta-agarase A</fullName>
        <ecNumber>3.2.1.81</ecNumber>
    </recommendedName>
    <component>
        <recommendedName>
            <fullName>Beta-agarase A catalytic chain</fullName>
            <shortName>AgaAc</shortName>
        </recommendedName>
    </component>
</protein>
<reference key="1">
    <citation type="journal article" date="2005" name="Biochem. J.">
        <title>The endo-beta-agarases AgaA and AgaB from the marine bacterium Zobellia galactanivorans: two paralogue enzymes with different molecular organizations and catalytic behaviours.</title>
        <authorList>
            <person name="Jam M."/>
            <person name="Flament D."/>
            <person name="Allouch J."/>
            <person name="Potin P."/>
            <person name="Thion L."/>
            <person name="Kloareg B."/>
            <person name="Czjzek M."/>
            <person name="Helbert W."/>
            <person name="Michel G."/>
            <person name="Barbeyron T."/>
        </authorList>
    </citation>
    <scope>NUCLEOTIDE SEQUENCE [GENOMIC DNA]</scope>
    <scope>PROTEIN SEQUENCE OF 116-125</scope>
    <scope>FUNCTION</scope>
    <scope>CATALYTIC ACTIVITY</scope>
    <scope>BIOPHYSICOCHEMICAL PROPERTIES</scope>
    <scope>SUBUNIT</scope>
    <scope>SUBCELLULAR LOCATION</scope>
    <source>
        <strain>DSM 12802 / CCUG 47099 / CIP 106680 / KCTC 12921 / NCIMB 13871 / Dsij</strain>
    </source>
</reference>
<reference key="2">
    <citation type="submission" date="2009-07" db="EMBL/GenBank/DDBJ databases">
        <title>Complete genome sequence of Zobellia galactanivorans Dsij.</title>
        <authorList>
            <consortium name="Genoscope - CEA"/>
        </authorList>
    </citation>
    <scope>NUCLEOTIDE SEQUENCE [LARGE SCALE GENOMIC DNA]</scope>
    <source>
        <strain>DSM 12802 / CCUG 47099 / CIP 106680 / KCTC 12921 / NCIMB 13871 / Dsij</strain>
    </source>
</reference>
<reference key="3">
    <citation type="journal article" date="2012" name="J. Biol. Chem.">
        <title>Biochemical and structural characterization of the complex agarolytic enzyme system from the marine bacterium Zobellia galactanivorans.</title>
        <authorList>
            <person name="Hehemann J.H."/>
            <person name="Correc G."/>
            <person name="Thomas F."/>
            <person name="Bernard T."/>
            <person name="Barbeyron T."/>
            <person name="Jam M."/>
            <person name="Helbert W."/>
            <person name="Michel G."/>
            <person name="Czjzek M."/>
        </authorList>
    </citation>
    <scope>INDUCTION</scope>
    <source>
        <strain>DSM 12802 / CCUG 47099 / CIP 106680 / KCTC 12921 / NCIMB 13871 / Dsij</strain>
    </source>
</reference>
<reference key="4">
    <citation type="journal article" date="2003" name="J. Biol. Chem.">
        <title>The three-dimensional structures of two beta-agarases.</title>
        <authorList>
            <person name="Allouch J."/>
            <person name="Jam M."/>
            <person name="Helbert W."/>
            <person name="Barbeyron T."/>
            <person name="Kloareg B."/>
            <person name="Henrissat B."/>
            <person name="Czjzek M."/>
        </authorList>
    </citation>
    <scope>X-RAY CRYSTALLOGRAPHY (1.48 ANGSTROMS) OF 20-295</scope>
    <scope>ACTIVE SITE</scope>
    <source>
        <strain>DSM 12802 / CCUG 47099 / CIP 106680 / KCTC 12921 / NCIMB 13871 / Dsij</strain>
    </source>
</reference>
<reference key="5">
    <citation type="journal article" date="2004" name="Structure">
        <title>Parallel substrate binding sites in a beta-agarase suggest a novel mode of action on double-helical agarose.</title>
        <authorList>
            <person name="Allouch J."/>
            <person name="Helbert W."/>
            <person name="Henrissat B."/>
            <person name="Czjzek M."/>
        </authorList>
    </citation>
    <scope>X-RAY CRYSTALLOGRAPHY (1.70 ANGSTROMS) OF 20-290 OF MUTANT SER-147 IN COMPLEX WITH GALACTOSE</scope>
    <scope>MUTAGENESIS OF GLU-147</scope>
    <source>
        <strain>DSM 12802 / CCUG 47099 / CIP 106680 / KCTC 12921 / NCIMB 13871 / Dsij</strain>
    </source>
</reference>
<dbReference type="EC" id="3.2.1.81"/>
<dbReference type="EMBL" id="AF098954">
    <property type="protein sequence ID" value="AAF21820.1"/>
    <property type="molecule type" value="Genomic_DNA"/>
</dbReference>
<dbReference type="EMBL" id="FP476056">
    <property type="protein sequence ID" value="CAZ98338.1"/>
    <property type="molecule type" value="Genomic_DNA"/>
</dbReference>
<dbReference type="RefSeq" id="WP_013995526.1">
    <property type="nucleotide sequence ID" value="NC_015844.1"/>
</dbReference>
<dbReference type="PDB" id="1O4Y">
    <property type="method" value="X-ray"/>
    <property type="resolution" value="1.48 A"/>
    <property type="chains" value="A=20-295"/>
</dbReference>
<dbReference type="PDB" id="1URX">
    <property type="method" value="X-ray"/>
    <property type="resolution" value="1.70 A"/>
    <property type="chains" value="A=20-290"/>
</dbReference>
<dbReference type="PDBsum" id="1O4Y"/>
<dbReference type="PDBsum" id="1URX"/>
<dbReference type="SMR" id="G0L322"/>
<dbReference type="STRING" id="63186.ZOBELLIA_4203"/>
<dbReference type="CAZy" id="GH16">
    <property type="family name" value="Glycoside Hydrolase Family 16"/>
</dbReference>
<dbReference type="KEGG" id="zga:ZOBELLIA_4203"/>
<dbReference type="HOGENOM" id="CLU_037753_0_0_10"/>
<dbReference type="OrthoDB" id="9809583at2"/>
<dbReference type="BioCyc" id="MetaCyc:MONOMER-16651"/>
<dbReference type="BRENDA" id="3.2.1.81">
    <property type="organism ID" value="7557"/>
</dbReference>
<dbReference type="SABIO-RK" id="G0L322"/>
<dbReference type="EvolutionaryTrace" id="G0L322"/>
<dbReference type="Proteomes" id="UP000008898">
    <property type="component" value="Chromosome"/>
</dbReference>
<dbReference type="GO" id="GO:0005576">
    <property type="term" value="C:extracellular region"/>
    <property type="evidence" value="ECO:0000314"/>
    <property type="project" value="UniProtKB"/>
</dbReference>
<dbReference type="GO" id="GO:0033916">
    <property type="term" value="F:beta-agarase activity"/>
    <property type="evidence" value="ECO:0000314"/>
    <property type="project" value="UniProtKB"/>
</dbReference>
<dbReference type="GO" id="GO:0005975">
    <property type="term" value="P:carbohydrate metabolic process"/>
    <property type="evidence" value="ECO:0000314"/>
    <property type="project" value="UniProtKB"/>
</dbReference>
<dbReference type="CDD" id="cd02178">
    <property type="entry name" value="GH16_beta_agarase"/>
    <property type="match status" value="1"/>
</dbReference>
<dbReference type="Gene3D" id="2.60.120.200">
    <property type="match status" value="1"/>
</dbReference>
<dbReference type="Gene3D" id="2.60.120.430">
    <property type="entry name" value="Galactose-binding lectin"/>
    <property type="match status" value="1"/>
</dbReference>
<dbReference type="InterPro" id="IPR049033">
    <property type="entry name" value="AGA-YXIM_GBD"/>
</dbReference>
<dbReference type="InterPro" id="IPR016287">
    <property type="entry name" value="Beta_agarase"/>
</dbReference>
<dbReference type="InterPro" id="IPR013320">
    <property type="entry name" value="ConA-like_dom_sf"/>
</dbReference>
<dbReference type="InterPro" id="IPR008979">
    <property type="entry name" value="Galactose-bd-like_sf"/>
</dbReference>
<dbReference type="InterPro" id="IPR000757">
    <property type="entry name" value="GH16"/>
</dbReference>
<dbReference type="InterPro" id="IPR026444">
    <property type="entry name" value="Secre_tail"/>
</dbReference>
<dbReference type="NCBIfam" id="TIGR04183">
    <property type="entry name" value="Por_Secre_tail"/>
    <property type="match status" value="1"/>
</dbReference>
<dbReference type="Pfam" id="PF21254">
    <property type="entry name" value="AGA-YXIM_GBD"/>
    <property type="match status" value="1"/>
</dbReference>
<dbReference type="Pfam" id="PF18962">
    <property type="entry name" value="Por_Secre_tail"/>
    <property type="match status" value="1"/>
</dbReference>
<dbReference type="SUPFAM" id="SSF49899">
    <property type="entry name" value="Concanavalin A-like lectins/glucanases"/>
    <property type="match status" value="1"/>
</dbReference>
<dbReference type="SUPFAM" id="SSF49785">
    <property type="entry name" value="Galactose-binding domain-like"/>
    <property type="match status" value="1"/>
</dbReference>
<dbReference type="PROSITE" id="PS51762">
    <property type="entry name" value="GH16_2"/>
    <property type="match status" value="1"/>
</dbReference>
<accession>G0L322</accession>
<accession>Q9RGX9</accession>